<geneLocation type="mitochondrion"/>
<reference key="1">
    <citation type="journal article" date="1999" name="Mol. Phylogenet. Evol.">
        <title>The tribal radiation of the family Bovidae (Artiodactyla) and the evolution of the mitochondrial cytochrome b gene.</title>
        <authorList>
            <person name="Hassanin A."/>
            <person name="Douzery E.J.P."/>
        </authorList>
    </citation>
    <scope>NUCLEOTIDE SEQUENCE [GENOMIC DNA]</scope>
    <source>
        <strain>Isolate #4320L</strain>
    </source>
</reference>
<reference key="2">
    <citation type="journal article" date="1999" name="Mol. Phylogenet. Evol.">
        <title>Phylogenetic relationships in the bovid subfamily Antilopinae based on mitochondrial DNA sequences.</title>
        <authorList>
            <person name="Rebholz W.E.R."/>
            <person name="Harley E.H."/>
        </authorList>
    </citation>
    <scope>NUCLEOTIDE SEQUENCE [GENOMIC DNA] OF 17-116</scope>
</reference>
<feature type="chain" id="PRO_0000060994" description="Cytochrome b">
    <location>
        <begin position="1"/>
        <end position="379"/>
    </location>
</feature>
<feature type="transmembrane region" description="Helical" evidence="2">
    <location>
        <begin position="33"/>
        <end position="53"/>
    </location>
</feature>
<feature type="transmembrane region" description="Helical" evidence="2">
    <location>
        <begin position="77"/>
        <end position="98"/>
    </location>
</feature>
<feature type="transmembrane region" description="Helical" evidence="2">
    <location>
        <begin position="113"/>
        <end position="133"/>
    </location>
</feature>
<feature type="transmembrane region" description="Helical" evidence="2">
    <location>
        <begin position="178"/>
        <end position="198"/>
    </location>
</feature>
<feature type="transmembrane region" description="Helical" evidence="2">
    <location>
        <begin position="226"/>
        <end position="246"/>
    </location>
</feature>
<feature type="transmembrane region" description="Helical" evidence="2">
    <location>
        <begin position="288"/>
        <end position="308"/>
    </location>
</feature>
<feature type="transmembrane region" description="Helical" evidence="2">
    <location>
        <begin position="320"/>
        <end position="340"/>
    </location>
</feature>
<feature type="transmembrane region" description="Helical" evidence="2">
    <location>
        <begin position="347"/>
        <end position="367"/>
    </location>
</feature>
<feature type="binding site" description="axial binding residue" evidence="2">
    <location>
        <position position="83"/>
    </location>
    <ligand>
        <name>heme b</name>
        <dbReference type="ChEBI" id="CHEBI:60344"/>
        <label>b562</label>
    </ligand>
    <ligandPart>
        <name>Fe</name>
        <dbReference type="ChEBI" id="CHEBI:18248"/>
    </ligandPart>
</feature>
<feature type="binding site" description="axial binding residue" evidence="2">
    <location>
        <position position="97"/>
    </location>
    <ligand>
        <name>heme b</name>
        <dbReference type="ChEBI" id="CHEBI:60344"/>
        <label>b566</label>
    </ligand>
    <ligandPart>
        <name>Fe</name>
        <dbReference type="ChEBI" id="CHEBI:18248"/>
    </ligandPart>
</feature>
<feature type="binding site" description="axial binding residue" evidence="2">
    <location>
        <position position="182"/>
    </location>
    <ligand>
        <name>heme b</name>
        <dbReference type="ChEBI" id="CHEBI:60344"/>
        <label>b562</label>
    </ligand>
    <ligandPart>
        <name>Fe</name>
        <dbReference type="ChEBI" id="CHEBI:18248"/>
    </ligandPart>
</feature>
<feature type="binding site" description="axial binding residue" evidence="2">
    <location>
        <position position="196"/>
    </location>
    <ligand>
        <name>heme b</name>
        <dbReference type="ChEBI" id="CHEBI:60344"/>
        <label>b566</label>
    </ligand>
    <ligandPart>
        <name>Fe</name>
        <dbReference type="ChEBI" id="CHEBI:18248"/>
    </ligandPart>
</feature>
<feature type="binding site" evidence="2">
    <location>
        <position position="201"/>
    </location>
    <ligand>
        <name>a ubiquinone</name>
        <dbReference type="ChEBI" id="CHEBI:16389"/>
    </ligand>
</feature>
<protein>
    <recommendedName>
        <fullName>Cytochrome b</fullName>
    </recommendedName>
    <alternativeName>
        <fullName>Complex III subunit 3</fullName>
    </alternativeName>
    <alternativeName>
        <fullName>Complex III subunit III</fullName>
    </alternativeName>
    <alternativeName>
        <fullName>Cytochrome b-c1 complex subunit 3</fullName>
    </alternativeName>
    <alternativeName>
        <fullName>Ubiquinol-cytochrome-c reductase complex cytochrome b subunit</fullName>
    </alternativeName>
</protein>
<organism>
    <name type="scientific">Gazella gazella</name>
    <name type="common">Mountain gazelle</name>
    <dbReference type="NCBI Taxonomy" id="69302"/>
    <lineage>
        <taxon>Eukaryota</taxon>
        <taxon>Metazoa</taxon>
        <taxon>Chordata</taxon>
        <taxon>Craniata</taxon>
        <taxon>Vertebrata</taxon>
        <taxon>Euteleostomi</taxon>
        <taxon>Mammalia</taxon>
        <taxon>Eutheria</taxon>
        <taxon>Laurasiatheria</taxon>
        <taxon>Artiodactyla</taxon>
        <taxon>Ruminantia</taxon>
        <taxon>Pecora</taxon>
        <taxon>Bovidae</taxon>
        <taxon>Antilopinae</taxon>
        <taxon>Gazella</taxon>
    </lineage>
</organism>
<evidence type="ECO:0000250" key="1"/>
<evidence type="ECO:0000250" key="2">
    <source>
        <dbReference type="UniProtKB" id="P00157"/>
    </source>
</evidence>
<evidence type="ECO:0000255" key="3">
    <source>
        <dbReference type="PROSITE-ProRule" id="PRU00967"/>
    </source>
</evidence>
<evidence type="ECO:0000255" key="4">
    <source>
        <dbReference type="PROSITE-ProRule" id="PRU00968"/>
    </source>
</evidence>
<gene>
    <name type="primary">MT-CYB</name>
    <name type="synonym">COB</name>
    <name type="synonym">CYTB</name>
    <name type="synonym">MTCYB</name>
</gene>
<proteinExistence type="inferred from homology"/>
<comment type="function">
    <text evidence="2">Component of the ubiquinol-cytochrome c reductase complex (complex III or cytochrome b-c1 complex) that is part of the mitochondrial respiratory chain. The b-c1 complex mediates electron transfer from ubiquinol to cytochrome c. Contributes to the generation of a proton gradient across the mitochondrial membrane that is then used for ATP synthesis.</text>
</comment>
<comment type="cofactor">
    <cofactor evidence="2">
        <name>heme b</name>
        <dbReference type="ChEBI" id="CHEBI:60344"/>
    </cofactor>
    <text evidence="2">Binds 2 heme b groups non-covalently.</text>
</comment>
<comment type="subunit">
    <text evidence="2">The cytochrome bc1 complex contains 11 subunits: 3 respiratory subunits (MT-CYB, CYC1 and UQCRFS1), 2 core proteins (UQCRC1 and UQCRC2) and 6 low-molecular weight proteins (UQCRH/QCR6, UQCRB/QCR7, UQCRQ/QCR8, UQCR10/QCR9, UQCR11/QCR10 and a cleavage product of UQCRFS1). This cytochrome bc1 complex then forms a dimer.</text>
</comment>
<comment type="subcellular location">
    <subcellularLocation>
        <location evidence="2">Mitochondrion inner membrane</location>
        <topology evidence="2">Multi-pass membrane protein</topology>
    </subcellularLocation>
</comment>
<comment type="miscellaneous">
    <text evidence="1">Heme 1 (or BL or b562) is low-potential and absorbs at about 562 nm, and heme 2 (or BH or b566) is high-potential and absorbs at about 566 nm.</text>
</comment>
<comment type="similarity">
    <text evidence="3 4">Belongs to the cytochrome b family.</text>
</comment>
<comment type="caution">
    <text evidence="2">The full-length protein contains only eight transmembrane helices, not nine as predicted by bioinformatics tools.</text>
</comment>
<accession>O48336</accession>
<name>CYB_GAZGA</name>
<sequence length="379" mass="42603">MINTRKTHPLMKIVNNAFIDLPAPSNISSWWNFGSLLGICLILQILTGLFLAMHYTADTATAFSSVTHICRDVNYGWIIRYMHANGASMFFICLFMHVGRGLYYGSYTFLETWNIGVILLFATMATAFMGYVLPWGQMSFWGATVITNLLSAIPYIGTNLVEWIWGGFSVDKATLTRFFAFHFILPFIIAALAMVHLLFLHETGSNNPTGISSDADKIPFHPYYTIKDILGALLLILVLMLLVLFSPDLLGDPDNYTPANPLNTPPHIKPEWYFLFAYAILRSIPNKLGGVLALVLSILILILMPLLHTSKQRSMMFRPISQCLFWILAADLLTLTWIGGQPVEHPYIIIGQLASIMYFLLILVLMPAASTIENNLLKW</sequence>
<dbReference type="EMBL" id="AJ222682">
    <property type="protein sequence ID" value="CAA10937.1"/>
    <property type="molecule type" value="Genomic_DNA"/>
</dbReference>
<dbReference type="EMBL" id="AF030623">
    <property type="protein sequence ID" value="AAB93594.1"/>
    <property type="molecule type" value="Genomic_DNA"/>
</dbReference>
<dbReference type="EMBL" id="AF030619">
    <property type="protein sequence ID" value="AAB93590.1"/>
    <property type="molecule type" value="Genomic_DNA"/>
</dbReference>
<dbReference type="EMBL" id="AF030620">
    <property type="protein sequence ID" value="AAB93591.1"/>
    <property type="molecule type" value="Genomic_DNA"/>
</dbReference>
<dbReference type="EMBL" id="AF030621">
    <property type="protein sequence ID" value="AAB93592.1"/>
    <property type="molecule type" value="Genomic_DNA"/>
</dbReference>
<dbReference type="EMBL" id="AF030622">
    <property type="protein sequence ID" value="AAB93593.1"/>
    <property type="molecule type" value="Genomic_DNA"/>
</dbReference>
<dbReference type="SMR" id="O48336"/>
<dbReference type="GO" id="GO:0005743">
    <property type="term" value="C:mitochondrial inner membrane"/>
    <property type="evidence" value="ECO:0007669"/>
    <property type="project" value="UniProtKB-SubCell"/>
</dbReference>
<dbReference type="GO" id="GO:0045275">
    <property type="term" value="C:respiratory chain complex III"/>
    <property type="evidence" value="ECO:0007669"/>
    <property type="project" value="InterPro"/>
</dbReference>
<dbReference type="GO" id="GO:0046872">
    <property type="term" value="F:metal ion binding"/>
    <property type="evidence" value="ECO:0007669"/>
    <property type="project" value="UniProtKB-KW"/>
</dbReference>
<dbReference type="GO" id="GO:0008121">
    <property type="term" value="F:ubiquinol-cytochrome-c reductase activity"/>
    <property type="evidence" value="ECO:0007669"/>
    <property type="project" value="InterPro"/>
</dbReference>
<dbReference type="GO" id="GO:0006122">
    <property type="term" value="P:mitochondrial electron transport, ubiquinol to cytochrome c"/>
    <property type="evidence" value="ECO:0007669"/>
    <property type="project" value="TreeGrafter"/>
</dbReference>
<dbReference type="CDD" id="cd00290">
    <property type="entry name" value="cytochrome_b_C"/>
    <property type="match status" value="1"/>
</dbReference>
<dbReference type="CDD" id="cd00284">
    <property type="entry name" value="Cytochrome_b_N"/>
    <property type="match status" value="1"/>
</dbReference>
<dbReference type="FunFam" id="1.20.810.10:FF:000002">
    <property type="entry name" value="Cytochrome b"/>
    <property type="match status" value="1"/>
</dbReference>
<dbReference type="Gene3D" id="1.20.810.10">
    <property type="entry name" value="Cytochrome Bc1 Complex, Chain C"/>
    <property type="match status" value="1"/>
</dbReference>
<dbReference type="InterPro" id="IPR005798">
    <property type="entry name" value="Cyt_b/b6_C"/>
</dbReference>
<dbReference type="InterPro" id="IPR036150">
    <property type="entry name" value="Cyt_b/b6_C_sf"/>
</dbReference>
<dbReference type="InterPro" id="IPR005797">
    <property type="entry name" value="Cyt_b/b6_N"/>
</dbReference>
<dbReference type="InterPro" id="IPR027387">
    <property type="entry name" value="Cytb/b6-like_sf"/>
</dbReference>
<dbReference type="InterPro" id="IPR030689">
    <property type="entry name" value="Cytochrome_b"/>
</dbReference>
<dbReference type="InterPro" id="IPR048260">
    <property type="entry name" value="Cytochrome_b_C_euk/bac"/>
</dbReference>
<dbReference type="InterPro" id="IPR048259">
    <property type="entry name" value="Cytochrome_b_N_euk/bac"/>
</dbReference>
<dbReference type="InterPro" id="IPR016174">
    <property type="entry name" value="Di-haem_cyt_TM"/>
</dbReference>
<dbReference type="PANTHER" id="PTHR19271">
    <property type="entry name" value="CYTOCHROME B"/>
    <property type="match status" value="1"/>
</dbReference>
<dbReference type="PANTHER" id="PTHR19271:SF16">
    <property type="entry name" value="CYTOCHROME B"/>
    <property type="match status" value="1"/>
</dbReference>
<dbReference type="Pfam" id="PF00032">
    <property type="entry name" value="Cytochrom_B_C"/>
    <property type="match status" value="1"/>
</dbReference>
<dbReference type="Pfam" id="PF00033">
    <property type="entry name" value="Cytochrome_B"/>
    <property type="match status" value="1"/>
</dbReference>
<dbReference type="PIRSF" id="PIRSF038885">
    <property type="entry name" value="COB"/>
    <property type="match status" value="1"/>
</dbReference>
<dbReference type="SUPFAM" id="SSF81648">
    <property type="entry name" value="a domain/subunit of cytochrome bc1 complex (Ubiquinol-cytochrome c reductase)"/>
    <property type="match status" value="1"/>
</dbReference>
<dbReference type="SUPFAM" id="SSF81342">
    <property type="entry name" value="Transmembrane di-heme cytochromes"/>
    <property type="match status" value="1"/>
</dbReference>
<dbReference type="PROSITE" id="PS51003">
    <property type="entry name" value="CYTB_CTER"/>
    <property type="match status" value="1"/>
</dbReference>
<dbReference type="PROSITE" id="PS51002">
    <property type="entry name" value="CYTB_NTER"/>
    <property type="match status" value="1"/>
</dbReference>
<keyword id="KW-0249">Electron transport</keyword>
<keyword id="KW-0349">Heme</keyword>
<keyword id="KW-0408">Iron</keyword>
<keyword id="KW-0472">Membrane</keyword>
<keyword id="KW-0479">Metal-binding</keyword>
<keyword id="KW-0496">Mitochondrion</keyword>
<keyword id="KW-0999">Mitochondrion inner membrane</keyword>
<keyword id="KW-0679">Respiratory chain</keyword>
<keyword id="KW-0812">Transmembrane</keyword>
<keyword id="KW-1133">Transmembrane helix</keyword>
<keyword id="KW-0813">Transport</keyword>
<keyword id="KW-0830">Ubiquinone</keyword>